<reference key="1">
    <citation type="journal article" date="2007" name="J. Bacteriol.">
        <title>The complete genome sequence of Roseobacter denitrificans reveals a mixotrophic rather than photosynthetic metabolism.</title>
        <authorList>
            <person name="Swingley W.D."/>
            <person name="Sadekar S."/>
            <person name="Mastrian S.D."/>
            <person name="Matthies H.J."/>
            <person name="Hao J."/>
            <person name="Ramos H."/>
            <person name="Acharya C.R."/>
            <person name="Conrad A.L."/>
            <person name="Taylor H.L."/>
            <person name="Dejesa L.C."/>
            <person name="Shah M.K."/>
            <person name="O'Huallachain M.E."/>
            <person name="Lince M.T."/>
            <person name="Blankenship R.E."/>
            <person name="Beatty J.T."/>
            <person name="Touchman J.W."/>
        </authorList>
    </citation>
    <scope>NUCLEOTIDE SEQUENCE [LARGE SCALE GENOMIC DNA]</scope>
    <source>
        <strain>ATCC 33942 / OCh 114</strain>
    </source>
</reference>
<sequence length="199" mass="21819">MRQGFPKARAGEVIGLFGGSFDPAHQGHAHITREALKRFGLDRVWWLVSPGNPLKPQGPAPLDTRMARAKAIMQHPRVIITDVETRLGTRYTAATLDQLSALYPGVHFVWLMGADNLAQFHKWQRWRDIASTTPLGVLARPGDRIPARMSPAAAVFGRARIPGRASQLLGRAAAPAWCFVNVPMVEQSSSAIRSKGGWV</sequence>
<organism>
    <name type="scientific">Roseobacter denitrificans (strain ATCC 33942 / OCh 114)</name>
    <name type="common">Erythrobacter sp. (strain OCh 114)</name>
    <name type="synonym">Roseobacter denitrificans</name>
    <dbReference type="NCBI Taxonomy" id="375451"/>
    <lineage>
        <taxon>Bacteria</taxon>
        <taxon>Pseudomonadati</taxon>
        <taxon>Pseudomonadota</taxon>
        <taxon>Alphaproteobacteria</taxon>
        <taxon>Rhodobacterales</taxon>
        <taxon>Roseobacteraceae</taxon>
        <taxon>Roseobacter</taxon>
    </lineage>
</organism>
<name>NADD_ROSDO</name>
<feature type="chain" id="PRO_0000310138" description="Probable nicotinate-nucleotide adenylyltransferase">
    <location>
        <begin position="1"/>
        <end position="199"/>
    </location>
</feature>
<protein>
    <recommendedName>
        <fullName evidence="1">Probable nicotinate-nucleotide adenylyltransferase</fullName>
        <ecNumber evidence="1">2.7.7.18</ecNumber>
    </recommendedName>
    <alternativeName>
        <fullName evidence="1">Deamido-NAD(+) diphosphorylase</fullName>
    </alternativeName>
    <alternativeName>
        <fullName evidence="1">Deamido-NAD(+) pyrophosphorylase</fullName>
    </alternativeName>
    <alternativeName>
        <fullName evidence="1">Nicotinate mononucleotide adenylyltransferase</fullName>
        <shortName evidence="1">NaMN adenylyltransferase</shortName>
    </alternativeName>
</protein>
<evidence type="ECO:0000255" key="1">
    <source>
        <dbReference type="HAMAP-Rule" id="MF_00244"/>
    </source>
</evidence>
<keyword id="KW-0067">ATP-binding</keyword>
<keyword id="KW-0520">NAD</keyword>
<keyword id="KW-0547">Nucleotide-binding</keyword>
<keyword id="KW-0548">Nucleotidyltransferase</keyword>
<keyword id="KW-0662">Pyridine nucleotide biosynthesis</keyword>
<keyword id="KW-1185">Reference proteome</keyword>
<keyword id="KW-0808">Transferase</keyword>
<comment type="function">
    <text evidence="1">Catalyzes the reversible adenylation of nicotinate mononucleotide (NaMN) to nicotinic acid adenine dinucleotide (NaAD).</text>
</comment>
<comment type="catalytic activity">
    <reaction evidence="1">
        <text>nicotinate beta-D-ribonucleotide + ATP + H(+) = deamido-NAD(+) + diphosphate</text>
        <dbReference type="Rhea" id="RHEA:22860"/>
        <dbReference type="ChEBI" id="CHEBI:15378"/>
        <dbReference type="ChEBI" id="CHEBI:30616"/>
        <dbReference type="ChEBI" id="CHEBI:33019"/>
        <dbReference type="ChEBI" id="CHEBI:57502"/>
        <dbReference type="ChEBI" id="CHEBI:58437"/>
        <dbReference type="EC" id="2.7.7.18"/>
    </reaction>
</comment>
<comment type="pathway">
    <text evidence="1">Cofactor biosynthesis; NAD(+) biosynthesis; deamido-NAD(+) from nicotinate D-ribonucleotide: step 1/1.</text>
</comment>
<comment type="similarity">
    <text evidence="1">Belongs to the NadD family.</text>
</comment>
<gene>
    <name evidence="1" type="primary">nadD</name>
    <name type="ordered locus">RD1_1243</name>
</gene>
<dbReference type="EC" id="2.7.7.18" evidence="1"/>
<dbReference type="EMBL" id="CP000362">
    <property type="protein sequence ID" value="ABG30890.1"/>
    <property type="molecule type" value="Genomic_DNA"/>
</dbReference>
<dbReference type="RefSeq" id="WP_011567510.1">
    <property type="nucleotide sequence ID" value="NC_008209.1"/>
</dbReference>
<dbReference type="SMR" id="Q16AV3"/>
<dbReference type="STRING" id="375451.RD1_1243"/>
<dbReference type="KEGG" id="rde:RD1_1243"/>
<dbReference type="eggNOG" id="COG1057">
    <property type="taxonomic scope" value="Bacteria"/>
</dbReference>
<dbReference type="HOGENOM" id="CLU_069765_2_0_5"/>
<dbReference type="OrthoDB" id="5295945at2"/>
<dbReference type="UniPathway" id="UPA00253">
    <property type="reaction ID" value="UER00332"/>
</dbReference>
<dbReference type="Proteomes" id="UP000007029">
    <property type="component" value="Chromosome"/>
</dbReference>
<dbReference type="GO" id="GO:0005524">
    <property type="term" value="F:ATP binding"/>
    <property type="evidence" value="ECO:0007669"/>
    <property type="project" value="UniProtKB-KW"/>
</dbReference>
<dbReference type="GO" id="GO:0004515">
    <property type="term" value="F:nicotinate-nucleotide adenylyltransferase activity"/>
    <property type="evidence" value="ECO:0007669"/>
    <property type="project" value="UniProtKB-UniRule"/>
</dbReference>
<dbReference type="GO" id="GO:0009435">
    <property type="term" value="P:NAD biosynthetic process"/>
    <property type="evidence" value="ECO:0007669"/>
    <property type="project" value="UniProtKB-UniRule"/>
</dbReference>
<dbReference type="CDD" id="cd02165">
    <property type="entry name" value="NMNAT"/>
    <property type="match status" value="1"/>
</dbReference>
<dbReference type="Gene3D" id="3.40.50.620">
    <property type="entry name" value="HUPs"/>
    <property type="match status" value="1"/>
</dbReference>
<dbReference type="HAMAP" id="MF_00244">
    <property type="entry name" value="NaMN_adenylyltr"/>
    <property type="match status" value="1"/>
</dbReference>
<dbReference type="InterPro" id="IPR004821">
    <property type="entry name" value="Cyt_trans-like"/>
</dbReference>
<dbReference type="InterPro" id="IPR005248">
    <property type="entry name" value="NadD/NMNAT"/>
</dbReference>
<dbReference type="InterPro" id="IPR014729">
    <property type="entry name" value="Rossmann-like_a/b/a_fold"/>
</dbReference>
<dbReference type="NCBIfam" id="TIGR00125">
    <property type="entry name" value="cyt_tran_rel"/>
    <property type="match status" value="1"/>
</dbReference>
<dbReference type="NCBIfam" id="TIGR00482">
    <property type="entry name" value="nicotinate (nicotinamide) nucleotide adenylyltransferase"/>
    <property type="match status" value="1"/>
</dbReference>
<dbReference type="NCBIfam" id="NF000843">
    <property type="entry name" value="PRK00071.2-2"/>
    <property type="match status" value="1"/>
</dbReference>
<dbReference type="NCBIfam" id="NF000845">
    <property type="entry name" value="PRK00071.2-4"/>
    <property type="match status" value="1"/>
</dbReference>
<dbReference type="PANTHER" id="PTHR39321">
    <property type="entry name" value="NICOTINATE-NUCLEOTIDE ADENYLYLTRANSFERASE-RELATED"/>
    <property type="match status" value="1"/>
</dbReference>
<dbReference type="PANTHER" id="PTHR39321:SF3">
    <property type="entry name" value="PHOSPHOPANTETHEINE ADENYLYLTRANSFERASE"/>
    <property type="match status" value="1"/>
</dbReference>
<dbReference type="Pfam" id="PF01467">
    <property type="entry name" value="CTP_transf_like"/>
    <property type="match status" value="1"/>
</dbReference>
<dbReference type="SUPFAM" id="SSF52374">
    <property type="entry name" value="Nucleotidylyl transferase"/>
    <property type="match status" value="1"/>
</dbReference>
<accession>Q16AV3</accession>
<proteinExistence type="inferred from homology"/>